<protein>
    <recommendedName>
        <fullName>CCR4-NOT transcription complex subunit 11</fullName>
    </recommendedName>
</protein>
<feature type="chain" id="PRO_0000390653" description="CCR4-NOT transcription complex subunit 11">
    <location>
        <begin position="1"/>
        <end position="642"/>
    </location>
</feature>
<feature type="region of interest" description="Disordered" evidence="2">
    <location>
        <begin position="78"/>
        <end position="167"/>
    </location>
</feature>
<feature type="region of interest" description="Disordered" evidence="2">
    <location>
        <begin position="589"/>
        <end position="627"/>
    </location>
</feature>
<feature type="compositionally biased region" description="Low complexity" evidence="2">
    <location>
        <begin position="589"/>
        <end position="625"/>
    </location>
</feature>
<name>CNO11_DICDI</name>
<keyword id="KW-0963">Cytoplasm</keyword>
<keyword id="KW-0539">Nucleus</keyword>
<keyword id="KW-1185">Reference proteome</keyword>
<keyword id="KW-0943">RNA-mediated gene silencing</keyword>
<keyword id="KW-0804">Transcription</keyword>
<keyword id="KW-0805">Transcription regulation</keyword>
<proteinExistence type="inferred from homology"/>
<sequence length="642" mass="71069">MIDSKDLATLLSLLDESDKPFETIATTFYRTFSKNDHFKVGCAIYTIIKDGFIRIPSQRLIGFYILFSLYKPDSSILSSNSLSSSSILTPSSTTTTTTTEHNNSNNNTSSPSFSSSTVPTNTTLQQNTPSSTSQAISPSSSTSSTSTSSYTNTTTNTTIPSSSPTSTTNTIIENVNDYPIAFNPFLPIFIDELEKQIDSSISSPLFNPIEKQILPLFLTNLPKDFSKKTPKEIINIGMNNTANTTTTTTTTTTTATTNITLPNISISKSSLKEYKNFYLERLPNHCFPSFRSIGISQNILFQLPSTTTTTTNTPTATTTTNTTINTQQSNPSLNTIKNHDINSEELSFFSFEPRFKRAEPPSFNPTTWINPSINHGLLLSNPMSSTVAATIAATATSAPTTILIPSPTTTTSYNSKKIVRDLMTKAIKGRLKKSQILQIKNEMDIDPKLAYYSGLTPKNLPFLVENNTQVAIDTLLKLINSPDFKDHFQTLISMEMNFRSMEVVNALATVDLPPHFIPMYITNCIDSCNNIKDKAMQQRSVRLVCVFIQSLIRNNIINIKNLFCEVQTFCLEFSKIREAISLFKAINDNNNTNNTNTNTNTNNSNTTNTNNNNNNNNNNNNNNNNLINIGEENPNLIIMATK</sequence>
<evidence type="ECO:0000250" key="1"/>
<evidence type="ECO:0000256" key="2">
    <source>
        <dbReference type="SAM" id="MobiDB-lite"/>
    </source>
</evidence>
<evidence type="ECO:0000269" key="3">
    <source>
    </source>
</evidence>
<evidence type="ECO:0000305" key="4"/>
<gene>
    <name type="primary">cnot11</name>
    <name type="ORF">DDB_G0279005</name>
</gene>
<reference key="1">
    <citation type="journal article" date="2005" name="Nature">
        <title>The genome of the social amoeba Dictyostelium discoideum.</title>
        <authorList>
            <person name="Eichinger L."/>
            <person name="Pachebat J.A."/>
            <person name="Gloeckner G."/>
            <person name="Rajandream M.A."/>
            <person name="Sucgang R."/>
            <person name="Berriman M."/>
            <person name="Song J."/>
            <person name="Olsen R."/>
            <person name="Szafranski K."/>
            <person name="Xu Q."/>
            <person name="Tunggal B."/>
            <person name="Kummerfeld S."/>
            <person name="Madera M."/>
            <person name="Konfortov B.A."/>
            <person name="Rivero F."/>
            <person name="Bankier A.T."/>
            <person name="Lehmann R."/>
            <person name="Hamlin N."/>
            <person name="Davies R."/>
            <person name="Gaudet P."/>
            <person name="Fey P."/>
            <person name="Pilcher K."/>
            <person name="Chen G."/>
            <person name="Saunders D."/>
            <person name="Sodergren E.J."/>
            <person name="Davis P."/>
            <person name="Kerhornou A."/>
            <person name="Nie X."/>
            <person name="Hall N."/>
            <person name="Anjard C."/>
            <person name="Hemphill L."/>
            <person name="Bason N."/>
            <person name="Farbrother P."/>
            <person name="Desany B."/>
            <person name="Just E."/>
            <person name="Morio T."/>
            <person name="Rost R."/>
            <person name="Churcher C.M."/>
            <person name="Cooper J."/>
            <person name="Haydock S."/>
            <person name="van Driessche N."/>
            <person name="Cronin A."/>
            <person name="Goodhead I."/>
            <person name="Muzny D.M."/>
            <person name="Mourier T."/>
            <person name="Pain A."/>
            <person name="Lu M."/>
            <person name="Harper D."/>
            <person name="Lindsay R."/>
            <person name="Hauser H."/>
            <person name="James K.D."/>
            <person name="Quiles M."/>
            <person name="Madan Babu M."/>
            <person name="Saito T."/>
            <person name="Buchrieser C."/>
            <person name="Wardroper A."/>
            <person name="Felder M."/>
            <person name="Thangavelu M."/>
            <person name="Johnson D."/>
            <person name="Knights A."/>
            <person name="Loulseged H."/>
            <person name="Mungall K.L."/>
            <person name="Oliver K."/>
            <person name="Price C."/>
            <person name="Quail M.A."/>
            <person name="Urushihara H."/>
            <person name="Hernandez J."/>
            <person name="Rabbinowitsch E."/>
            <person name="Steffen D."/>
            <person name="Sanders M."/>
            <person name="Ma J."/>
            <person name="Kohara Y."/>
            <person name="Sharp S."/>
            <person name="Simmonds M.N."/>
            <person name="Spiegler S."/>
            <person name="Tivey A."/>
            <person name="Sugano S."/>
            <person name="White B."/>
            <person name="Walker D."/>
            <person name="Woodward J.R."/>
            <person name="Winckler T."/>
            <person name="Tanaka Y."/>
            <person name="Shaulsky G."/>
            <person name="Schleicher M."/>
            <person name="Weinstock G.M."/>
            <person name="Rosenthal A."/>
            <person name="Cox E.C."/>
            <person name="Chisholm R.L."/>
            <person name="Gibbs R.A."/>
            <person name="Loomis W.F."/>
            <person name="Platzer M."/>
            <person name="Kay R.R."/>
            <person name="Williams J.G."/>
            <person name="Dear P.H."/>
            <person name="Noegel A.A."/>
            <person name="Barrell B.G."/>
            <person name="Kuspa A."/>
        </authorList>
    </citation>
    <scope>NUCLEOTIDE SEQUENCE [LARGE SCALE GENOMIC DNA]</scope>
    <source>
        <strain>AX4</strain>
    </source>
</reference>
<reference key="2">
    <citation type="journal article" date="2006" name="J. Cell Sci.">
        <title>Functional genomics in Dictyostelium: midA, a new conserved protein, is required for mitochondrial function and development.</title>
        <authorList>
            <person name="Torija P."/>
            <person name="Vicente J.J."/>
            <person name="Rodrigues T.B."/>
            <person name="Robles A."/>
            <person name="Cerdan S."/>
            <person name="Sastre L."/>
            <person name="Calvo R.M."/>
            <person name="Escalante R."/>
        </authorList>
    </citation>
    <scope>DISRUPTION PHENOTYPE</scope>
</reference>
<organism>
    <name type="scientific">Dictyostelium discoideum</name>
    <name type="common">Social amoeba</name>
    <dbReference type="NCBI Taxonomy" id="44689"/>
    <lineage>
        <taxon>Eukaryota</taxon>
        <taxon>Amoebozoa</taxon>
        <taxon>Evosea</taxon>
        <taxon>Eumycetozoa</taxon>
        <taxon>Dictyostelia</taxon>
        <taxon>Dictyosteliales</taxon>
        <taxon>Dictyosteliaceae</taxon>
        <taxon>Dictyostelium</taxon>
    </lineage>
</organism>
<comment type="function">
    <text evidence="1">Component of the CCR4-NOT complex which is one of the major cellular mRNA deadenylases and is linked to various cellular processes including bulk mRNA degradation, miRNA-mediated repression, translational repression during translational initiation and general transcription regulation. Additional complex functions may be a consequence of its influence on mRNA expression (By similarity).</text>
</comment>
<comment type="subunit">
    <text evidence="1">Component of the CCR4-NOT complex.</text>
</comment>
<comment type="subcellular location">
    <subcellularLocation>
        <location evidence="1">Cytoplasm</location>
    </subcellularLocation>
    <subcellularLocation>
        <location evidence="1">Nucleus</location>
    </subcellularLocation>
</comment>
<comment type="disruption phenotype">
    <text evidence="3">No obvious phenotypic change is observed.</text>
</comment>
<comment type="similarity">
    <text evidence="4">Belongs to the CNOT11 family.</text>
</comment>
<dbReference type="EMBL" id="AAFI02000026">
    <property type="protein sequence ID" value="EAS66887.1"/>
    <property type="molecule type" value="Genomic_DNA"/>
</dbReference>
<dbReference type="RefSeq" id="XP_001134571.1">
    <property type="nucleotide sequence ID" value="XM_001134571.1"/>
</dbReference>
<dbReference type="SMR" id="Q1ZXI2"/>
<dbReference type="FunCoup" id="Q1ZXI2">
    <property type="interactions" value="10"/>
</dbReference>
<dbReference type="STRING" id="44689.Q1ZXI2"/>
<dbReference type="PaxDb" id="44689-DDB0232148"/>
<dbReference type="EnsemblProtists" id="EAS66887">
    <property type="protein sequence ID" value="EAS66887"/>
    <property type="gene ID" value="DDB_G0279005"/>
</dbReference>
<dbReference type="GeneID" id="8621826"/>
<dbReference type="KEGG" id="ddi:DDB_G0279005"/>
<dbReference type="dictyBase" id="DDB_G0279005">
    <property type="gene designation" value="cnot11"/>
</dbReference>
<dbReference type="VEuPathDB" id="AmoebaDB:DDB_G0279005"/>
<dbReference type="eggNOG" id="KOG4508">
    <property type="taxonomic scope" value="Eukaryota"/>
</dbReference>
<dbReference type="HOGENOM" id="CLU_028648_0_0_1"/>
<dbReference type="InParanoid" id="Q1ZXI2"/>
<dbReference type="OMA" id="PDHSVQW"/>
<dbReference type="PhylomeDB" id="Q1ZXI2"/>
<dbReference type="Reactome" id="R-DDI-6804115">
    <property type="pathway name" value="TP53 regulates transcription of additional cell cycle genes whose exact role in the p53 pathway remain uncertain"/>
</dbReference>
<dbReference type="PRO" id="PR:Q1ZXI2"/>
<dbReference type="Proteomes" id="UP000002195">
    <property type="component" value="Chromosome 3"/>
</dbReference>
<dbReference type="GO" id="GO:0030014">
    <property type="term" value="C:CCR4-NOT complex"/>
    <property type="evidence" value="ECO:0000318"/>
    <property type="project" value="GO_Central"/>
</dbReference>
<dbReference type="GO" id="GO:0005737">
    <property type="term" value="C:cytoplasm"/>
    <property type="evidence" value="ECO:0007669"/>
    <property type="project" value="UniProtKB-SubCell"/>
</dbReference>
<dbReference type="GO" id="GO:0005634">
    <property type="term" value="C:nucleus"/>
    <property type="evidence" value="ECO:0007669"/>
    <property type="project" value="UniProtKB-SubCell"/>
</dbReference>
<dbReference type="GO" id="GO:0031047">
    <property type="term" value="P:regulatory ncRNA-mediated gene silencing"/>
    <property type="evidence" value="ECO:0007669"/>
    <property type="project" value="UniProtKB-KW"/>
</dbReference>
<dbReference type="InterPro" id="IPR019312">
    <property type="entry name" value="CNOT11"/>
</dbReference>
<dbReference type="PANTHER" id="PTHR15975">
    <property type="entry name" value="CCR4-NOT TRANSCRIPTION COMPLEX SUBUNIT 11"/>
    <property type="match status" value="1"/>
</dbReference>
<dbReference type="PANTHER" id="PTHR15975:SF0">
    <property type="entry name" value="CCR4-NOT TRANSCRIPTION COMPLEX SUBUNIT 11"/>
    <property type="match status" value="1"/>
</dbReference>
<dbReference type="Pfam" id="PF10155">
    <property type="entry name" value="CNOT11"/>
    <property type="match status" value="1"/>
</dbReference>
<accession>Q1ZXI2</accession>